<feature type="chain" id="PRO_0000242856" description="ATP phosphoribosyltransferase regulatory subunit">
    <location>
        <begin position="1"/>
        <end position="384"/>
    </location>
</feature>
<gene>
    <name evidence="1" type="primary">hisZ</name>
    <name type="ordered locus">Rru_A1105</name>
</gene>
<keyword id="KW-0028">Amino-acid biosynthesis</keyword>
<keyword id="KW-0963">Cytoplasm</keyword>
<keyword id="KW-0368">Histidine biosynthesis</keyword>
<keyword id="KW-1185">Reference proteome</keyword>
<accession>Q2RVD9</accession>
<comment type="function">
    <text evidence="1">Required for the first step of histidine biosynthesis. May allow the feedback regulation of ATP phosphoribosyltransferase activity by histidine.</text>
</comment>
<comment type="pathway">
    <text evidence="1">Amino-acid biosynthesis; L-histidine biosynthesis; L-histidine from 5-phospho-alpha-D-ribose 1-diphosphate: step 1/9.</text>
</comment>
<comment type="subunit">
    <text evidence="1">Heteromultimer composed of HisG and HisZ subunits.</text>
</comment>
<comment type="subcellular location">
    <subcellularLocation>
        <location evidence="1">Cytoplasm</location>
    </subcellularLocation>
</comment>
<comment type="miscellaneous">
    <text>This function is generally fulfilled by the C-terminal part of HisG, which is missing in some bacteria such as this one.</text>
</comment>
<comment type="similarity">
    <text evidence="1">Belongs to the class-II aminoacyl-tRNA synthetase family. HisZ subfamily.</text>
</comment>
<organism>
    <name type="scientific">Rhodospirillum rubrum (strain ATCC 11170 / ATH 1.1.1 / DSM 467 / LMG 4362 / NCIMB 8255 / S1)</name>
    <dbReference type="NCBI Taxonomy" id="269796"/>
    <lineage>
        <taxon>Bacteria</taxon>
        <taxon>Pseudomonadati</taxon>
        <taxon>Pseudomonadota</taxon>
        <taxon>Alphaproteobacteria</taxon>
        <taxon>Rhodospirillales</taxon>
        <taxon>Rhodospirillaceae</taxon>
        <taxon>Rhodospirillum</taxon>
    </lineage>
</organism>
<reference key="1">
    <citation type="journal article" date="2011" name="Stand. Genomic Sci.">
        <title>Complete genome sequence of Rhodospirillum rubrum type strain (S1).</title>
        <authorList>
            <person name="Munk A.C."/>
            <person name="Copeland A."/>
            <person name="Lucas S."/>
            <person name="Lapidus A."/>
            <person name="Del Rio T.G."/>
            <person name="Barry K."/>
            <person name="Detter J.C."/>
            <person name="Hammon N."/>
            <person name="Israni S."/>
            <person name="Pitluck S."/>
            <person name="Brettin T."/>
            <person name="Bruce D."/>
            <person name="Han C."/>
            <person name="Tapia R."/>
            <person name="Gilna P."/>
            <person name="Schmutz J."/>
            <person name="Larimer F."/>
            <person name="Land M."/>
            <person name="Kyrpides N.C."/>
            <person name="Mavromatis K."/>
            <person name="Richardson P."/>
            <person name="Rohde M."/>
            <person name="Goeker M."/>
            <person name="Klenk H.P."/>
            <person name="Zhang Y."/>
            <person name="Roberts G.P."/>
            <person name="Reslewic S."/>
            <person name="Schwartz D.C."/>
        </authorList>
    </citation>
    <scope>NUCLEOTIDE SEQUENCE [LARGE SCALE GENOMIC DNA]</scope>
    <source>
        <strain>ATCC 11170 / ATH 1.1.1 / DSM 467 / LMG 4362 / NCIMB 8255 / S1</strain>
    </source>
</reference>
<protein>
    <recommendedName>
        <fullName evidence="1">ATP phosphoribosyltransferase regulatory subunit</fullName>
    </recommendedName>
</protein>
<proteinExistence type="inferred from homology"/>
<name>HISZ_RHORT</name>
<evidence type="ECO:0000255" key="1">
    <source>
        <dbReference type="HAMAP-Rule" id="MF_00125"/>
    </source>
</evidence>
<sequence length="384" mass="40043">MTVTAKTAARALLPNGLRDVLPPDAAFEVATVERLVSVFAANGYERVKTPLIEFEEGLLTGASRATAGQTFRVMDPITQRMMGLRADITIQVARLAASRLAKAPRPLRLTYSGQVLRVKGTQLRPERQFTQAGIELIGAGGVDAIAESVLLTVEALAQAGLPRVTVDLNCPPLVPALCRALGLSEDLAGELRKLLEQKDFTAAAALAGDAAGALSALSGTVGPAERALPVLAALDLPGEAAGHRDALLALARKVMTAAPEVDVTVDPLEHKGFEYYTGCSFALFAQGARGELGRGGEYPGDLNGTVEPCCGATLYMDAVLDGMVRPAPAPRVLVASTLARTTRRALQADGWVTVPALTAEAGAAEARRLGCGHVLDDEGRPVAV</sequence>
<dbReference type="EMBL" id="CP000230">
    <property type="protein sequence ID" value="ABC21906.1"/>
    <property type="molecule type" value="Genomic_DNA"/>
</dbReference>
<dbReference type="RefSeq" id="WP_011388860.1">
    <property type="nucleotide sequence ID" value="NC_007643.1"/>
</dbReference>
<dbReference type="RefSeq" id="YP_426193.1">
    <property type="nucleotide sequence ID" value="NC_007643.1"/>
</dbReference>
<dbReference type="SMR" id="Q2RVD9"/>
<dbReference type="STRING" id="269796.Rru_A1105"/>
<dbReference type="EnsemblBacteria" id="ABC21906">
    <property type="protein sequence ID" value="ABC21906"/>
    <property type="gene ID" value="Rru_A1105"/>
</dbReference>
<dbReference type="KEGG" id="rru:Rru_A1105"/>
<dbReference type="PATRIC" id="fig|269796.9.peg.1163"/>
<dbReference type="eggNOG" id="COG3705">
    <property type="taxonomic scope" value="Bacteria"/>
</dbReference>
<dbReference type="HOGENOM" id="CLU_025113_0_1_5"/>
<dbReference type="PhylomeDB" id="Q2RVD9"/>
<dbReference type="UniPathway" id="UPA00031">
    <property type="reaction ID" value="UER00006"/>
</dbReference>
<dbReference type="Proteomes" id="UP000001929">
    <property type="component" value="Chromosome"/>
</dbReference>
<dbReference type="GO" id="GO:0005737">
    <property type="term" value="C:cytoplasm"/>
    <property type="evidence" value="ECO:0007669"/>
    <property type="project" value="UniProtKB-SubCell"/>
</dbReference>
<dbReference type="GO" id="GO:0004821">
    <property type="term" value="F:histidine-tRNA ligase activity"/>
    <property type="evidence" value="ECO:0007669"/>
    <property type="project" value="TreeGrafter"/>
</dbReference>
<dbReference type="GO" id="GO:0006427">
    <property type="term" value="P:histidyl-tRNA aminoacylation"/>
    <property type="evidence" value="ECO:0007669"/>
    <property type="project" value="TreeGrafter"/>
</dbReference>
<dbReference type="GO" id="GO:0000105">
    <property type="term" value="P:L-histidine biosynthetic process"/>
    <property type="evidence" value="ECO:0007669"/>
    <property type="project" value="UniProtKB-UniRule"/>
</dbReference>
<dbReference type="Gene3D" id="3.30.930.10">
    <property type="entry name" value="Bira Bifunctional Protein, Domain 2"/>
    <property type="match status" value="1"/>
</dbReference>
<dbReference type="HAMAP" id="MF_00125">
    <property type="entry name" value="HisZ"/>
    <property type="match status" value="1"/>
</dbReference>
<dbReference type="InterPro" id="IPR006195">
    <property type="entry name" value="aa-tRNA-synth_II"/>
</dbReference>
<dbReference type="InterPro" id="IPR045864">
    <property type="entry name" value="aa-tRNA-synth_II/BPL/LPL"/>
</dbReference>
<dbReference type="InterPro" id="IPR041715">
    <property type="entry name" value="HisRS-like_core"/>
</dbReference>
<dbReference type="InterPro" id="IPR004516">
    <property type="entry name" value="HisRS/HisZ"/>
</dbReference>
<dbReference type="InterPro" id="IPR004517">
    <property type="entry name" value="HisZ"/>
</dbReference>
<dbReference type="PANTHER" id="PTHR43707:SF1">
    <property type="entry name" value="HISTIDINE--TRNA LIGASE, MITOCHONDRIAL-RELATED"/>
    <property type="match status" value="1"/>
</dbReference>
<dbReference type="PANTHER" id="PTHR43707">
    <property type="entry name" value="HISTIDYL-TRNA SYNTHETASE"/>
    <property type="match status" value="1"/>
</dbReference>
<dbReference type="Pfam" id="PF13393">
    <property type="entry name" value="tRNA-synt_His"/>
    <property type="match status" value="1"/>
</dbReference>
<dbReference type="SUPFAM" id="SSF55681">
    <property type="entry name" value="Class II aaRS and biotin synthetases"/>
    <property type="match status" value="1"/>
</dbReference>
<dbReference type="PROSITE" id="PS50862">
    <property type="entry name" value="AA_TRNA_LIGASE_II"/>
    <property type="match status" value="1"/>
</dbReference>